<dbReference type="EC" id="5.3.1.16" evidence="1"/>
<dbReference type="EMBL" id="CP000127">
    <property type="protein sequence ID" value="ABA59494.1"/>
    <property type="molecule type" value="Genomic_DNA"/>
</dbReference>
<dbReference type="RefSeq" id="WP_002813359.1">
    <property type="nucleotide sequence ID" value="NC_007484.1"/>
</dbReference>
<dbReference type="SMR" id="Q3J6Q2"/>
<dbReference type="FunCoup" id="Q3J6Q2">
    <property type="interactions" value="466"/>
</dbReference>
<dbReference type="STRING" id="323261.Noc_3053"/>
<dbReference type="KEGG" id="noc:Noc_3053"/>
<dbReference type="eggNOG" id="COG0106">
    <property type="taxonomic scope" value="Bacteria"/>
</dbReference>
<dbReference type="HOGENOM" id="CLU_048577_1_1_6"/>
<dbReference type="InParanoid" id="Q3J6Q2"/>
<dbReference type="UniPathway" id="UPA00031">
    <property type="reaction ID" value="UER00009"/>
</dbReference>
<dbReference type="Proteomes" id="UP000006838">
    <property type="component" value="Chromosome"/>
</dbReference>
<dbReference type="GO" id="GO:0005737">
    <property type="term" value="C:cytoplasm"/>
    <property type="evidence" value="ECO:0007669"/>
    <property type="project" value="UniProtKB-SubCell"/>
</dbReference>
<dbReference type="GO" id="GO:0003949">
    <property type="term" value="F:1-(5-phosphoribosyl)-5-[(5-phosphoribosylamino)methylideneamino]imidazole-4-carboxamide isomerase activity"/>
    <property type="evidence" value="ECO:0007669"/>
    <property type="project" value="UniProtKB-UniRule"/>
</dbReference>
<dbReference type="GO" id="GO:0000105">
    <property type="term" value="P:L-histidine biosynthetic process"/>
    <property type="evidence" value="ECO:0007669"/>
    <property type="project" value="UniProtKB-UniRule"/>
</dbReference>
<dbReference type="GO" id="GO:0000162">
    <property type="term" value="P:L-tryptophan biosynthetic process"/>
    <property type="evidence" value="ECO:0007669"/>
    <property type="project" value="TreeGrafter"/>
</dbReference>
<dbReference type="CDD" id="cd04732">
    <property type="entry name" value="HisA"/>
    <property type="match status" value="1"/>
</dbReference>
<dbReference type="FunFam" id="3.20.20.70:FF:000009">
    <property type="entry name" value="1-(5-phosphoribosyl)-5-[(5-phosphoribosylamino)methylideneamino] imidazole-4-carboxamide isomerase"/>
    <property type="match status" value="1"/>
</dbReference>
<dbReference type="Gene3D" id="3.20.20.70">
    <property type="entry name" value="Aldolase class I"/>
    <property type="match status" value="1"/>
</dbReference>
<dbReference type="HAMAP" id="MF_01014">
    <property type="entry name" value="HisA"/>
    <property type="match status" value="1"/>
</dbReference>
<dbReference type="InterPro" id="IPR013785">
    <property type="entry name" value="Aldolase_TIM"/>
</dbReference>
<dbReference type="InterPro" id="IPR006062">
    <property type="entry name" value="His_biosynth"/>
</dbReference>
<dbReference type="InterPro" id="IPR006063">
    <property type="entry name" value="HisA_bact_arch"/>
</dbReference>
<dbReference type="InterPro" id="IPR044524">
    <property type="entry name" value="Isoase_HisA-like"/>
</dbReference>
<dbReference type="InterPro" id="IPR023016">
    <property type="entry name" value="Isoase_HisA-like_bact"/>
</dbReference>
<dbReference type="InterPro" id="IPR011060">
    <property type="entry name" value="RibuloseP-bd_barrel"/>
</dbReference>
<dbReference type="NCBIfam" id="TIGR00007">
    <property type="entry name" value="1-(5-phosphoribosyl)-5-[(5-phosphoribosylamino)methylideneamino]imidazole-4-carboxamide isomerase"/>
    <property type="match status" value="1"/>
</dbReference>
<dbReference type="NCBIfam" id="NF010112">
    <property type="entry name" value="PRK13585.1"/>
    <property type="match status" value="1"/>
</dbReference>
<dbReference type="PANTHER" id="PTHR43090">
    <property type="entry name" value="1-(5-PHOSPHORIBOSYL)-5-[(5-PHOSPHORIBOSYLAMINO)METHYLIDENEAMINO] IMIDAZOLE-4-CARBOXAMIDE ISOMERASE"/>
    <property type="match status" value="1"/>
</dbReference>
<dbReference type="PANTHER" id="PTHR43090:SF2">
    <property type="entry name" value="1-(5-PHOSPHORIBOSYL)-5-[(5-PHOSPHORIBOSYLAMINO)METHYLIDENEAMINO] IMIDAZOLE-4-CARBOXAMIDE ISOMERASE"/>
    <property type="match status" value="1"/>
</dbReference>
<dbReference type="Pfam" id="PF00977">
    <property type="entry name" value="His_biosynth"/>
    <property type="match status" value="1"/>
</dbReference>
<dbReference type="SUPFAM" id="SSF51366">
    <property type="entry name" value="Ribulose-phoshate binding barrel"/>
    <property type="match status" value="1"/>
</dbReference>
<reference key="1">
    <citation type="journal article" date="2006" name="Appl. Environ. Microbiol.">
        <title>Complete genome sequence of the marine, chemolithoautotrophic, ammonia-oxidizing bacterium Nitrosococcus oceani ATCC 19707.</title>
        <authorList>
            <person name="Klotz M.G."/>
            <person name="Arp D.J."/>
            <person name="Chain P.S.G."/>
            <person name="El-Sheikh A.F."/>
            <person name="Hauser L.J."/>
            <person name="Hommes N.G."/>
            <person name="Larimer F.W."/>
            <person name="Malfatti S.A."/>
            <person name="Norton J.M."/>
            <person name="Poret-Peterson A.T."/>
            <person name="Vergez L.M."/>
            <person name="Ward B.B."/>
        </authorList>
    </citation>
    <scope>NUCLEOTIDE SEQUENCE [LARGE SCALE GENOMIC DNA]</scope>
    <source>
        <strain>ATCC 19707 / BCRC 17464 / JCM 30415 / NCIMB 11848 / C-107</strain>
    </source>
</reference>
<accession>Q3J6Q2</accession>
<proteinExistence type="inferred from homology"/>
<comment type="catalytic activity">
    <reaction evidence="1">
        <text>1-(5-phospho-beta-D-ribosyl)-5-[(5-phospho-beta-D-ribosylamino)methylideneamino]imidazole-4-carboxamide = 5-[(5-phospho-1-deoxy-D-ribulos-1-ylimino)methylamino]-1-(5-phospho-beta-D-ribosyl)imidazole-4-carboxamide</text>
        <dbReference type="Rhea" id="RHEA:15469"/>
        <dbReference type="ChEBI" id="CHEBI:58435"/>
        <dbReference type="ChEBI" id="CHEBI:58525"/>
        <dbReference type="EC" id="5.3.1.16"/>
    </reaction>
</comment>
<comment type="pathway">
    <text evidence="1">Amino-acid biosynthesis; L-histidine biosynthesis; L-histidine from 5-phospho-alpha-D-ribose 1-diphosphate: step 4/9.</text>
</comment>
<comment type="subcellular location">
    <subcellularLocation>
        <location evidence="1">Cytoplasm</location>
    </subcellularLocation>
</comment>
<comment type="similarity">
    <text evidence="1">Belongs to the HisA/HisF family.</text>
</comment>
<protein>
    <recommendedName>
        <fullName evidence="1">1-(5-phosphoribosyl)-5-[(5-phosphoribosylamino)methylideneamino] imidazole-4-carboxamide isomerase</fullName>
        <ecNumber evidence="1">5.3.1.16</ecNumber>
    </recommendedName>
    <alternativeName>
        <fullName evidence="1">Phosphoribosylformimino-5-aminoimidazole carboxamide ribotide isomerase</fullName>
    </alternativeName>
</protein>
<evidence type="ECO:0000255" key="1">
    <source>
        <dbReference type="HAMAP-Rule" id="MF_01014"/>
    </source>
</evidence>
<gene>
    <name evidence="1" type="primary">hisA</name>
    <name type="ordered locus">Noc_3053</name>
</gene>
<name>HIS4_NITOC</name>
<organism>
    <name type="scientific">Nitrosococcus oceani (strain ATCC 19707 / BCRC 17464 / JCM 30415 / NCIMB 11848 / C-107)</name>
    <dbReference type="NCBI Taxonomy" id="323261"/>
    <lineage>
        <taxon>Bacteria</taxon>
        <taxon>Pseudomonadati</taxon>
        <taxon>Pseudomonadota</taxon>
        <taxon>Gammaproteobacteria</taxon>
        <taxon>Chromatiales</taxon>
        <taxon>Chromatiaceae</taxon>
        <taxon>Nitrosococcus</taxon>
    </lineage>
</organism>
<keyword id="KW-0028">Amino-acid biosynthesis</keyword>
<keyword id="KW-0963">Cytoplasm</keyword>
<keyword id="KW-0368">Histidine biosynthesis</keyword>
<keyword id="KW-0413">Isomerase</keyword>
<keyword id="KW-1185">Reference proteome</keyword>
<feature type="chain" id="PRO_0000229064" description="1-(5-phosphoribosyl)-5-[(5-phosphoribosylamino)methylideneamino] imidazole-4-carboxamide isomerase">
    <location>
        <begin position="1"/>
        <end position="249"/>
    </location>
</feature>
<feature type="active site" description="Proton acceptor" evidence="1">
    <location>
        <position position="8"/>
    </location>
</feature>
<feature type="active site" description="Proton donor" evidence="1">
    <location>
        <position position="130"/>
    </location>
</feature>
<sequence>MLLIPAIDLKGGKCVRLRQGRMEDDTVFSDDPVAVALHWAEAGAKRLHLVDLDGAFAGQPVNADIIYHIAQALPDMDIQVGGGIRDSDTIQTYLDAGVRYAIIGTKAINAPHFVADACLEFPGHILLGLDAREGKIAINGWSKLSRHNLIDIAQRFEKDGVEAIIYTDIQRDGMMKGVNIEATSELAKAINIPVIASGGVSSLTEIEALCQHEQDGIGGAIIGRALYEEKIQLAEALAIAKRLSGESTA</sequence>